<gene>
    <name type="primary">nisX1</name>
    <name type="ordered locus">LL0137</name>
    <name type="ORF">L0458</name>
</gene>
<gene>
    <name type="primary">nisX2</name>
    <name type="ordered locus">LL0140</name>
    <name type="ORF">L0459</name>
</gene>
<gene>
    <name type="primary">nisX3</name>
    <name type="ordered locus">LL0637</name>
    <name type="ORF">L0461</name>
</gene>
<gene>
    <name type="primary">nisX4</name>
    <name type="ordered locus">LL0822</name>
    <name type="ORF">L0462</name>
</gene>
<gene>
    <name type="primary">nisX5</name>
    <name type="ordered locus">LL2145</name>
    <name type="ORF">L0465</name>
</gene>
<reference key="1">
    <citation type="journal article" date="1990" name="J. Gen. Microbiol.">
        <title>Analysis of the genetic determinant for production of the peptide antibiotic nisin.</title>
        <authorList>
            <person name="Dodd H.M."/>
            <person name="Horn N."/>
            <person name="Gasson M.J."/>
        </authorList>
    </citation>
    <scope>NUCLEOTIDE SEQUENCE [GENOMIC DNA]</scope>
</reference>
<reference key="2">
    <citation type="journal article" date="1992" name="Appl. Environ. Microbiol.">
        <title>A lactococcal expression system for engineered nisins.</title>
        <authorList>
            <person name="Dodd H.M."/>
            <person name="Horn N."/>
            <person name="Gasson M.J."/>
        </authorList>
    </citation>
    <scope>NUCLEOTIDE SEQUENCE [GENOMIC DNA]</scope>
</reference>
<reference key="3">
    <citation type="submission" date="1992-08" db="EMBL/GenBank/DDBJ databases">
        <authorList>
            <person name="Araya T."/>
        </authorList>
    </citation>
    <scope>NUCLEOTIDE SEQUENCE [GENOMIC DNA]</scope>
</reference>
<reference key="4">
    <citation type="journal article" date="2001" name="Genome Res.">
        <title>The complete genome sequence of the lactic acid bacterium Lactococcus lactis ssp. lactis IL1403.</title>
        <authorList>
            <person name="Bolotin A."/>
            <person name="Wincker P."/>
            <person name="Mauger S."/>
            <person name="Jaillon O."/>
            <person name="Malarme K."/>
            <person name="Weissenbach J."/>
            <person name="Ehrlich S.D."/>
            <person name="Sorokin A."/>
        </authorList>
    </citation>
    <scope>NUCLEOTIDE SEQUENCE [LARGE SCALE GENOMIC DNA]</scope>
    <source>
        <strain>IL1403</strain>
    </source>
</reference>
<reference key="5">
    <citation type="journal article" date="1992" name="Appl. Environ. Microbiol.">
        <title>Biosynthesis of the lantibiotic nisin: genomic organization and membrane localization of the NisB protein.</title>
        <authorList>
            <person name="Engelke G."/>
            <person name="Gutowski-Eckel Z."/>
            <person name="Hammelmann M."/>
            <person name="Entian K.-D."/>
        </authorList>
    </citation>
    <scope>NUCLEOTIDE SEQUENCE [GENOMIC DNA] OF 146-253</scope>
    <source>
        <strain>6F3</strain>
    </source>
</reference>
<feature type="chain" id="PRO_0000075486" description="Transposase for insertion sequence element IS904">
    <location>
        <begin position="1"/>
        <end position="253"/>
    </location>
</feature>
<feature type="domain" description="Integrase catalytic" evidence="1">
    <location>
        <begin position="90"/>
        <end position="253"/>
    </location>
</feature>
<name>T904_LACLA</name>
<comment type="function">
    <text>Involved in the transposition of the insertion sequence.</text>
</comment>
<comment type="similarity">
    <text evidence="2">Belongs to the transposase IS3/IS150/IS904 family.</text>
</comment>
<protein>
    <recommendedName>
        <fullName>Transposase for insertion sequence element IS904</fullName>
    </recommendedName>
</protein>
<proteinExistence type="inferred from homology"/>
<sequence>MHRRPSKQQVEREILSEKIKAVFHEHKGRYGAVRITKVLHNTGIMTNTKRVGKLMHLMGLYAKGSRYKYKHYNRKGASLSRPNLINQIFKATAPNKVWLGDMTYIPTKEGTLYLAVNIDVFSRKIVGWSMSSRMQDKLVRDCFLQACGKEHPQPGLIVHTDQGSQYTSSRYQSTLRQVGAQSSMSRKGNPYDNAMMESFYKTLKRELINDAHFETRAEATQEIFKYIETYYNTKRMHSGLDYKSPKDFEKYNS</sequence>
<dbReference type="EMBL" id="M27276">
    <property type="protein sequence ID" value="AAA25194.1"/>
    <property type="molecule type" value="Genomic_DNA"/>
</dbReference>
<dbReference type="EMBL" id="M79445">
    <property type="protein sequence ID" value="AAA25197.1"/>
    <property type="molecule type" value="Genomic_DNA"/>
</dbReference>
<dbReference type="EMBL" id="D00696">
    <property type="protein sequence ID" value="BAA00601.1"/>
    <property type="molecule type" value="Genomic_DNA"/>
</dbReference>
<dbReference type="EMBL" id="AE005176">
    <property type="protein sequence ID" value="AAK04235.1"/>
    <property type="molecule type" value="Genomic_DNA"/>
</dbReference>
<dbReference type="EMBL" id="AE005176">
    <property type="protein sequence ID" value="AAK04238.1"/>
    <property type="molecule type" value="Genomic_DNA"/>
</dbReference>
<dbReference type="EMBL" id="AE005176">
    <property type="protein sequence ID" value="AAK04735.1"/>
    <property type="molecule type" value="Genomic_DNA"/>
</dbReference>
<dbReference type="EMBL" id="AE005176">
    <property type="protein sequence ID" value="AAK04920.1"/>
    <property type="molecule type" value="Genomic_DNA"/>
</dbReference>
<dbReference type="EMBL" id="AE005176">
    <property type="protein sequence ID" value="AAK06243.1"/>
    <property type="molecule type" value="Genomic_DNA"/>
</dbReference>
<dbReference type="EMBL" id="X68307">
    <property type="protein sequence ID" value="CAA48379.1"/>
    <property type="molecule type" value="Genomic_DNA"/>
</dbReference>
<dbReference type="PIR" id="A45821">
    <property type="entry name" value="A45821"/>
</dbReference>
<dbReference type="PIR" id="F86727">
    <property type="entry name" value="F86727"/>
</dbReference>
<dbReference type="RefSeq" id="NP_266293.1">
    <property type="nucleotide sequence ID" value="NC_002662.1"/>
</dbReference>
<dbReference type="RefSeq" id="NP_266296.1">
    <property type="nucleotide sequence ID" value="NC_002662.1"/>
</dbReference>
<dbReference type="RefSeq" id="NP_266793.1">
    <property type="nucleotide sequence ID" value="NC_002662.1"/>
</dbReference>
<dbReference type="RefSeq" id="NP_266978.1">
    <property type="nucleotide sequence ID" value="NC_002662.1"/>
</dbReference>
<dbReference type="RefSeq" id="NP_268302.1">
    <property type="nucleotide sequence ID" value="NC_002662.1"/>
</dbReference>
<dbReference type="SMR" id="P35878"/>
<dbReference type="PaxDb" id="272623-L0458"/>
<dbReference type="EnsemblBacteria" id="AAK04235">
    <property type="protein sequence ID" value="AAK04235"/>
    <property type="gene ID" value="L0458"/>
</dbReference>
<dbReference type="EnsemblBacteria" id="AAK04238">
    <property type="protein sequence ID" value="AAK04238"/>
    <property type="gene ID" value="L0459"/>
</dbReference>
<dbReference type="EnsemblBacteria" id="AAK04735">
    <property type="protein sequence ID" value="AAK04735"/>
    <property type="gene ID" value="L0461"/>
</dbReference>
<dbReference type="EnsemblBacteria" id="AAK04920">
    <property type="protein sequence ID" value="AAK04920"/>
    <property type="gene ID" value="L0462"/>
</dbReference>
<dbReference type="EnsemblBacteria" id="AAK06243">
    <property type="protein sequence ID" value="AAK06243"/>
    <property type="gene ID" value="L0465"/>
</dbReference>
<dbReference type="KEGG" id="lla:L0458"/>
<dbReference type="KEGG" id="lla:L0459"/>
<dbReference type="KEGG" id="lla:L0461"/>
<dbReference type="KEGG" id="lla:L0462"/>
<dbReference type="KEGG" id="lla:L0465"/>
<dbReference type="PATRIC" id="fig|272623.7.peg.152"/>
<dbReference type="eggNOG" id="COG2801">
    <property type="taxonomic scope" value="Bacteria"/>
</dbReference>
<dbReference type="HOGENOM" id="CLU_027402_4_2_9"/>
<dbReference type="OrthoDB" id="342869at2"/>
<dbReference type="Proteomes" id="UP000002196">
    <property type="component" value="Chromosome"/>
</dbReference>
<dbReference type="GO" id="GO:0003677">
    <property type="term" value="F:DNA binding"/>
    <property type="evidence" value="ECO:0007669"/>
    <property type="project" value="UniProtKB-KW"/>
</dbReference>
<dbReference type="GO" id="GO:0015074">
    <property type="term" value="P:DNA integration"/>
    <property type="evidence" value="ECO:0007669"/>
    <property type="project" value="InterPro"/>
</dbReference>
<dbReference type="GO" id="GO:0006310">
    <property type="term" value="P:DNA recombination"/>
    <property type="evidence" value="ECO:0007669"/>
    <property type="project" value="UniProtKB-KW"/>
</dbReference>
<dbReference type="GO" id="GO:0032196">
    <property type="term" value="P:transposition"/>
    <property type="evidence" value="ECO:0007669"/>
    <property type="project" value="UniProtKB-KW"/>
</dbReference>
<dbReference type="Gene3D" id="3.30.420.10">
    <property type="entry name" value="Ribonuclease H-like superfamily/Ribonuclease H"/>
    <property type="match status" value="1"/>
</dbReference>
<dbReference type="InterPro" id="IPR025948">
    <property type="entry name" value="HTH-like_dom"/>
</dbReference>
<dbReference type="InterPro" id="IPR001584">
    <property type="entry name" value="Integrase_cat-core"/>
</dbReference>
<dbReference type="InterPro" id="IPR012337">
    <property type="entry name" value="RNaseH-like_sf"/>
</dbReference>
<dbReference type="InterPro" id="IPR036397">
    <property type="entry name" value="RNaseH_sf"/>
</dbReference>
<dbReference type="InterPro" id="IPR048020">
    <property type="entry name" value="Transpos_IS3"/>
</dbReference>
<dbReference type="InterPro" id="IPR050900">
    <property type="entry name" value="Transposase_IS3/IS150/IS904"/>
</dbReference>
<dbReference type="NCBIfam" id="NF033516">
    <property type="entry name" value="transpos_IS3"/>
    <property type="match status" value="1"/>
</dbReference>
<dbReference type="PANTHER" id="PTHR46889:SF7">
    <property type="entry name" value="TRANSPOSASE FOR INSERTION SEQUENCE ELEMENT IS904"/>
    <property type="match status" value="1"/>
</dbReference>
<dbReference type="PANTHER" id="PTHR46889">
    <property type="entry name" value="TRANSPOSASE INSF FOR INSERTION SEQUENCE IS3B-RELATED"/>
    <property type="match status" value="1"/>
</dbReference>
<dbReference type="Pfam" id="PF13276">
    <property type="entry name" value="HTH_21"/>
    <property type="match status" value="1"/>
</dbReference>
<dbReference type="Pfam" id="PF00665">
    <property type="entry name" value="rve"/>
    <property type="match status" value="1"/>
</dbReference>
<dbReference type="Pfam" id="PF13333">
    <property type="entry name" value="rve_2"/>
    <property type="match status" value="1"/>
</dbReference>
<dbReference type="SUPFAM" id="SSF53098">
    <property type="entry name" value="Ribonuclease H-like"/>
    <property type="match status" value="1"/>
</dbReference>
<dbReference type="PROSITE" id="PS50994">
    <property type="entry name" value="INTEGRASE"/>
    <property type="match status" value="1"/>
</dbReference>
<evidence type="ECO:0000255" key="1">
    <source>
        <dbReference type="PROSITE-ProRule" id="PRU00457"/>
    </source>
</evidence>
<evidence type="ECO:0000305" key="2"/>
<accession>P35878</accession>
<accession>Q03204</accession>
<organism>
    <name type="scientific">Lactococcus lactis subsp. lactis (strain IL1403)</name>
    <name type="common">Streptococcus lactis</name>
    <dbReference type="NCBI Taxonomy" id="272623"/>
    <lineage>
        <taxon>Bacteria</taxon>
        <taxon>Bacillati</taxon>
        <taxon>Bacillota</taxon>
        <taxon>Bacilli</taxon>
        <taxon>Lactobacillales</taxon>
        <taxon>Streptococcaceae</taxon>
        <taxon>Lactococcus</taxon>
    </lineage>
</organism>
<keyword id="KW-0233">DNA recombination</keyword>
<keyword id="KW-0238">DNA-binding</keyword>
<keyword id="KW-1185">Reference proteome</keyword>
<keyword id="KW-0814">Transposable element</keyword>
<keyword id="KW-0815">Transposition</keyword>